<proteinExistence type="inferred from homology"/>
<name>HUTI_XANOM</name>
<protein>
    <recommendedName>
        <fullName evidence="1">Imidazolonepropionase</fullName>
        <ecNumber evidence="1">3.5.2.7</ecNumber>
    </recommendedName>
    <alternativeName>
        <fullName evidence="1">Imidazolone-5-propionate hydrolase</fullName>
    </alternativeName>
</protein>
<sequence length="401" mass="42425">MHCDVLWHNAQLMTLDAADGGLGIVDDGTVACQQGRIVYAGPAAQAPALQPHATHDCQRRWISPGLIDCHTHLVYAGNRANEFEQRLRGASYADIAAAGGGIVATVRATRAADDAALLAASLPRLDAMLGEGVTTLEIKSGYGLTLDDEIKQLRVARQLAALRKVEVVPTFLGAHAVPPGGDAQRYTDQVCTQMIPAIAAQGLAEAVDVFCEHLAFSHAQAEQVFIAAQAHGLHIKIHAEQLSNQHGAELAARYGALSADHIEYLDQAGIAAMAGAGTVAVLLPGAFYFTRDTQVPPIAALRAAGVPLALATDCNPGTSPLTSPLLAMNMAATLFRMTVDECIAGFTREAARALGRSERLGRLRAGMDCDLAIWDIDAPADLVYRMGFNPLHARVLRGHLC</sequence>
<comment type="function">
    <text evidence="1">Catalyzes the hydrolytic cleavage of the carbon-nitrogen bond in imidazolone-5-propanoate to yield N-formimidoyl-L-glutamate. It is the third step in the universal histidine degradation pathway.</text>
</comment>
<comment type="catalytic activity">
    <reaction evidence="1">
        <text>4-imidazolone-5-propanoate + H2O = N-formimidoyl-L-glutamate</text>
        <dbReference type="Rhea" id="RHEA:23660"/>
        <dbReference type="ChEBI" id="CHEBI:15377"/>
        <dbReference type="ChEBI" id="CHEBI:58928"/>
        <dbReference type="ChEBI" id="CHEBI:77893"/>
        <dbReference type="EC" id="3.5.2.7"/>
    </reaction>
</comment>
<comment type="cofactor">
    <cofactor evidence="1">
        <name>Zn(2+)</name>
        <dbReference type="ChEBI" id="CHEBI:29105"/>
    </cofactor>
    <cofactor evidence="1">
        <name>Fe(3+)</name>
        <dbReference type="ChEBI" id="CHEBI:29034"/>
    </cofactor>
    <text evidence="1">Binds 1 zinc or iron ion per subunit.</text>
</comment>
<comment type="pathway">
    <text evidence="1">Amino-acid degradation; L-histidine degradation into L-glutamate; N-formimidoyl-L-glutamate from L-histidine: step 3/3.</text>
</comment>
<comment type="subcellular location">
    <subcellularLocation>
        <location evidence="1">Cytoplasm</location>
    </subcellularLocation>
</comment>
<comment type="similarity">
    <text evidence="1">Belongs to the metallo-dependent hydrolases superfamily. HutI family.</text>
</comment>
<organism>
    <name type="scientific">Xanthomonas oryzae pv. oryzae (strain MAFF 311018)</name>
    <dbReference type="NCBI Taxonomy" id="342109"/>
    <lineage>
        <taxon>Bacteria</taxon>
        <taxon>Pseudomonadati</taxon>
        <taxon>Pseudomonadota</taxon>
        <taxon>Gammaproteobacteria</taxon>
        <taxon>Lysobacterales</taxon>
        <taxon>Lysobacteraceae</taxon>
        <taxon>Xanthomonas</taxon>
    </lineage>
</organism>
<keyword id="KW-0963">Cytoplasm</keyword>
<keyword id="KW-0369">Histidine metabolism</keyword>
<keyword id="KW-0378">Hydrolase</keyword>
<keyword id="KW-0408">Iron</keyword>
<keyword id="KW-0479">Metal-binding</keyword>
<keyword id="KW-0862">Zinc</keyword>
<accession>Q2P345</accession>
<gene>
    <name evidence="1" type="primary">hutI</name>
    <name type="ordered locus">XOO2277</name>
</gene>
<reference key="1">
    <citation type="journal article" date="2005" name="Jpn. Agric. Res. Q.">
        <title>Genome sequence of Xanthomonas oryzae pv. oryzae suggests contribution of large numbers of effector genes and insertion sequences to its race diversity.</title>
        <authorList>
            <person name="Ochiai H."/>
            <person name="Inoue Y."/>
            <person name="Takeya M."/>
            <person name="Sasaki A."/>
            <person name="Kaku H."/>
        </authorList>
    </citation>
    <scope>NUCLEOTIDE SEQUENCE [LARGE SCALE GENOMIC DNA]</scope>
    <source>
        <strain>MAFF 311018</strain>
    </source>
</reference>
<dbReference type="EC" id="3.5.2.7" evidence="1"/>
<dbReference type="EMBL" id="AP008229">
    <property type="protein sequence ID" value="BAE69032.1"/>
    <property type="molecule type" value="Genomic_DNA"/>
</dbReference>
<dbReference type="RefSeq" id="WP_011259060.1">
    <property type="nucleotide sequence ID" value="NC_007705.1"/>
</dbReference>
<dbReference type="SMR" id="Q2P345"/>
<dbReference type="KEGG" id="xom:XOO2277"/>
<dbReference type="HOGENOM" id="CLU_041647_0_0_6"/>
<dbReference type="UniPathway" id="UPA00379">
    <property type="reaction ID" value="UER00551"/>
</dbReference>
<dbReference type="GO" id="GO:0005737">
    <property type="term" value="C:cytoplasm"/>
    <property type="evidence" value="ECO:0007669"/>
    <property type="project" value="UniProtKB-SubCell"/>
</dbReference>
<dbReference type="GO" id="GO:0050480">
    <property type="term" value="F:imidazolonepropionase activity"/>
    <property type="evidence" value="ECO:0007669"/>
    <property type="project" value="UniProtKB-UniRule"/>
</dbReference>
<dbReference type="GO" id="GO:0005506">
    <property type="term" value="F:iron ion binding"/>
    <property type="evidence" value="ECO:0007669"/>
    <property type="project" value="UniProtKB-UniRule"/>
</dbReference>
<dbReference type="GO" id="GO:0008270">
    <property type="term" value="F:zinc ion binding"/>
    <property type="evidence" value="ECO:0007669"/>
    <property type="project" value="UniProtKB-UniRule"/>
</dbReference>
<dbReference type="GO" id="GO:0019556">
    <property type="term" value="P:L-histidine catabolic process to glutamate and formamide"/>
    <property type="evidence" value="ECO:0007669"/>
    <property type="project" value="UniProtKB-UniPathway"/>
</dbReference>
<dbReference type="GO" id="GO:0019557">
    <property type="term" value="P:L-histidine catabolic process to glutamate and formate"/>
    <property type="evidence" value="ECO:0007669"/>
    <property type="project" value="UniProtKB-UniPathway"/>
</dbReference>
<dbReference type="FunFam" id="3.20.20.140:FF:000007">
    <property type="entry name" value="Imidazolonepropionase"/>
    <property type="match status" value="1"/>
</dbReference>
<dbReference type="Gene3D" id="3.20.20.140">
    <property type="entry name" value="Metal-dependent hydrolases"/>
    <property type="match status" value="1"/>
</dbReference>
<dbReference type="Gene3D" id="2.30.40.10">
    <property type="entry name" value="Urease, subunit C, domain 1"/>
    <property type="match status" value="1"/>
</dbReference>
<dbReference type="HAMAP" id="MF_00372">
    <property type="entry name" value="HutI"/>
    <property type="match status" value="1"/>
</dbReference>
<dbReference type="InterPro" id="IPR013108">
    <property type="entry name" value="Amidohydro_3"/>
</dbReference>
<dbReference type="InterPro" id="IPR005920">
    <property type="entry name" value="HutI"/>
</dbReference>
<dbReference type="InterPro" id="IPR011059">
    <property type="entry name" value="Metal-dep_hydrolase_composite"/>
</dbReference>
<dbReference type="InterPro" id="IPR032466">
    <property type="entry name" value="Metal_Hydrolase"/>
</dbReference>
<dbReference type="NCBIfam" id="TIGR01224">
    <property type="entry name" value="hutI"/>
    <property type="match status" value="1"/>
</dbReference>
<dbReference type="PANTHER" id="PTHR42752">
    <property type="entry name" value="IMIDAZOLONEPROPIONASE"/>
    <property type="match status" value="1"/>
</dbReference>
<dbReference type="PANTHER" id="PTHR42752:SF1">
    <property type="entry name" value="IMIDAZOLONEPROPIONASE-RELATED"/>
    <property type="match status" value="1"/>
</dbReference>
<dbReference type="Pfam" id="PF07969">
    <property type="entry name" value="Amidohydro_3"/>
    <property type="match status" value="1"/>
</dbReference>
<dbReference type="SUPFAM" id="SSF51338">
    <property type="entry name" value="Composite domain of metallo-dependent hydrolases"/>
    <property type="match status" value="1"/>
</dbReference>
<dbReference type="SUPFAM" id="SSF51556">
    <property type="entry name" value="Metallo-dependent hydrolases"/>
    <property type="match status" value="1"/>
</dbReference>
<evidence type="ECO:0000255" key="1">
    <source>
        <dbReference type="HAMAP-Rule" id="MF_00372"/>
    </source>
</evidence>
<feature type="chain" id="PRO_0000306539" description="Imidazolonepropionase">
    <location>
        <begin position="1"/>
        <end position="401"/>
    </location>
</feature>
<feature type="binding site" evidence="1">
    <location>
        <position position="70"/>
    </location>
    <ligand>
        <name>Fe(3+)</name>
        <dbReference type="ChEBI" id="CHEBI:29034"/>
    </ligand>
</feature>
<feature type="binding site" evidence="1">
    <location>
        <position position="70"/>
    </location>
    <ligand>
        <name>Zn(2+)</name>
        <dbReference type="ChEBI" id="CHEBI:29105"/>
    </ligand>
</feature>
<feature type="binding site" evidence="1">
    <location>
        <position position="72"/>
    </location>
    <ligand>
        <name>Fe(3+)</name>
        <dbReference type="ChEBI" id="CHEBI:29034"/>
    </ligand>
</feature>
<feature type="binding site" evidence="1">
    <location>
        <position position="72"/>
    </location>
    <ligand>
        <name>Zn(2+)</name>
        <dbReference type="ChEBI" id="CHEBI:29105"/>
    </ligand>
</feature>
<feature type="binding site" evidence="1">
    <location>
        <position position="79"/>
    </location>
    <ligand>
        <name>4-imidazolone-5-propanoate</name>
        <dbReference type="ChEBI" id="CHEBI:77893"/>
    </ligand>
</feature>
<feature type="binding site" evidence="1">
    <location>
        <position position="142"/>
    </location>
    <ligand>
        <name>4-imidazolone-5-propanoate</name>
        <dbReference type="ChEBI" id="CHEBI:77893"/>
    </ligand>
</feature>
<feature type="binding site" evidence="1">
    <location>
        <position position="142"/>
    </location>
    <ligand>
        <name>N-formimidoyl-L-glutamate</name>
        <dbReference type="ChEBI" id="CHEBI:58928"/>
    </ligand>
</feature>
<feature type="binding site" evidence="1">
    <location>
        <position position="175"/>
    </location>
    <ligand>
        <name>4-imidazolone-5-propanoate</name>
        <dbReference type="ChEBI" id="CHEBI:77893"/>
    </ligand>
</feature>
<feature type="binding site" evidence="1">
    <location>
        <position position="238"/>
    </location>
    <ligand>
        <name>Fe(3+)</name>
        <dbReference type="ChEBI" id="CHEBI:29034"/>
    </ligand>
</feature>
<feature type="binding site" evidence="1">
    <location>
        <position position="238"/>
    </location>
    <ligand>
        <name>Zn(2+)</name>
        <dbReference type="ChEBI" id="CHEBI:29105"/>
    </ligand>
</feature>
<feature type="binding site" evidence="1">
    <location>
        <position position="241"/>
    </location>
    <ligand>
        <name>4-imidazolone-5-propanoate</name>
        <dbReference type="ChEBI" id="CHEBI:77893"/>
    </ligand>
</feature>
<feature type="binding site" evidence="1">
    <location>
        <position position="313"/>
    </location>
    <ligand>
        <name>Fe(3+)</name>
        <dbReference type="ChEBI" id="CHEBI:29034"/>
    </ligand>
</feature>
<feature type="binding site" evidence="1">
    <location>
        <position position="313"/>
    </location>
    <ligand>
        <name>Zn(2+)</name>
        <dbReference type="ChEBI" id="CHEBI:29105"/>
    </ligand>
</feature>
<feature type="binding site" evidence="1">
    <location>
        <position position="315"/>
    </location>
    <ligand>
        <name>N-formimidoyl-L-glutamate</name>
        <dbReference type="ChEBI" id="CHEBI:58928"/>
    </ligand>
</feature>
<feature type="binding site" evidence="1">
    <location>
        <position position="317"/>
    </location>
    <ligand>
        <name>N-formimidoyl-L-glutamate</name>
        <dbReference type="ChEBI" id="CHEBI:58928"/>
    </ligand>
</feature>
<feature type="binding site" evidence="1">
    <location>
        <position position="318"/>
    </location>
    <ligand>
        <name>4-imidazolone-5-propanoate</name>
        <dbReference type="ChEBI" id="CHEBI:77893"/>
    </ligand>
</feature>